<feature type="initiator methionine" description="Removed" evidence="2">
    <location>
        <position position="1"/>
    </location>
</feature>
<feature type="chain" id="PRO_0000235804" description="Protein XRP2">
    <location>
        <begin position="2"/>
        <end position="347"/>
    </location>
</feature>
<feature type="domain" description="C-CAP/cofactor C-like" evidence="3">
    <location>
        <begin position="21"/>
        <end position="176"/>
    </location>
</feature>
<feature type="region of interest" description="Disordered" evidence="4">
    <location>
        <begin position="1"/>
        <end position="22"/>
    </location>
</feature>
<feature type="compositionally biased region" description="Basic residues" evidence="4">
    <location>
        <begin position="1"/>
        <end position="11"/>
    </location>
</feature>
<feature type="binding site" evidence="1">
    <location>
        <begin position="95"/>
        <end position="96"/>
    </location>
    <ligand>
        <name>GTP</name>
        <dbReference type="ChEBI" id="CHEBI:37565"/>
    </ligand>
</feature>
<feature type="binding site" evidence="1">
    <location>
        <begin position="112"/>
        <end position="115"/>
    </location>
    <ligand>
        <name>GTP</name>
        <dbReference type="ChEBI" id="CHEBI:37565"/>
    </ligand>
</feature>
<feature type="lipid moiety-binding region" description="N-myristoyl glycine" evidence="2">
    <location>
        <position position="2"/>
    </location>
</feature>
<feature type="lipid moiety-binding region" description="S-palmitoyl cysteine" evidence="1">
    <location>
        <position position="3"/>
    </location>
</feature>
<feature type="splice variant" id="VSP_018481" description="In isoform 4." evidence="6">
    <location>
        <begin position="1"/>
        <end position="37"/>
    </location>
</feature>
<feature type="splice variant" id="VSP_018482" description="In isoform 2." evidence="6">
    <original>MFVSEKKETASGDVDSFYNFAEIQMGI</original>
    <variation>VLGMEPRTLLGKKTECQKVWMACQAQTIVTELQCQKRALDPLNCGYKWL</variation>
    <location>
        <begin position="321"/>
        <end position="347"/>
    </location>
</feature>
<feature type="splice variant" id="VSP_018483" description="In isoform 3." evidence="6">
    <original>MF</original>
    <variation>IP</variation>
    <location>
        <begin position="321"/>
        <end position="322"/>
    </location>
</feature>
<feature type="splice variant" id="VSP_018484" description="In isoform 3." evidence="6">
    <location>
        <begin position="323"/>
        <end position="347"/>
    </location>
</feature>
<protein>
    <recommendedName>
        <fullName>Protein XRP2</fullName>
    </recommendedName>
</protein>
<name>XRP2_MOUSE</name>
<organism>
    <name type="scientific">Mus musculus</name>
    <name type="common">Mouse</name>
    <dbReference type="NCBI Taxonomy" id="10090"/>
    <lineage>
        <taxon>Eukaryota</taxon>
        <taxon>Metazoa</taxon>
        <taxon>Chordata</taxon>
        <taxon>Craniata</taxon>
        <taxon>Vertebrata</taxon>
        <taxon>Euteleostomi</taxon>
        <taxon>Mammalia</taxon>
        <taxon>Eutheria</taxon>
        <taxon>Euarchontoglires</taxon>
        <taxon>Glires</taxon>
        <taxon>Rodentia</taxon>
        <taxon>Myomorpha</taxon>
        <taxon>Muroidea</taxon>
        <taxon>Muridae</taxon>
        <taxon>Murinae</taxon>
        <taxon>Mus</taxon>
        <taxon>Mus</taxon>
    </lineage>
</organism>
<gene>
    <name type="primary">Rp2</name>
    <name type="synonym">Rp2h</name>
</gene>
<reference key="1">
    <citation type="journal article" date="2001" name="Hum. Mol. Genet.">
        <title>Mutations in the X-linked RP2 gene cause intracellular misrouting and loss of the protein.</title>
        <authorList>
            <person name="Schwahn U."/>
            <person name="Paland N."/>
            <person name="Techritz S."/>
            <person name="Lenzner S."/>
            <person name="Berger W."/>
        </authorList>
    </citation>
    <scope>NUCLEOTIDE SEQUENCE [MRNA] (ISOFORM 1)</scope>
</reference>
<reference key="2">
    <citation type="journal article" date="2005" name="Science">
        <title>The transcriptional landscape of the mammalian genome.</title>
        <authorList>
            <person name="Carninci P."/>
            <person name="Kasukawa T."/>
            <person name="Katayama S."/>
            <person name="Gough J."/>
            <person name="Frith M.C."/>
            <person name="Maeda N."/>
            <person name="Oyama R."/>
            <person name="Ravasi T."/>
            <person name="Lenhard B."/>
            <person name="Wells C."/>
            <person name="Kodzius R."/>
            <person name="Shimokawa K."/>
            <person name="Bajic V.B."/>
            <person name="Brenner S.E."/>
            <person name="Batalov S."/>
            <person name="Forrest A.R."/>
            <person name="Zavolan M."/>
            <person name="Davis M.J."/>
            <person name="Wilming L.G."/>
            <person name="Aidinis V."/>
            <person name="Allen J.E."/>
            <person name="Ambesi-Impiombato A."/>
            <person name="Apweiler R."/>
            <person name="Aturaliya R.N."/>
            <person name="Bailey T.L."/>
            <person name="Bansal M."/>
            <person name="Baxter L."/>
            <person name="Beisel K.W."/>
            <person name="Bersano T."/>
            <person name="Bono H."/>
            <person name="Chalk A.M."/>
            <person name="Chiu K.P."/>
            <person name="Choudhary V."/>
            <person name="Christoffels A."/>
            <person name="Clutterbuck D.R."/>
            <person name="Crowe M.L."/>
            <person name="Dalla E."/>
            <person name="Dalrymple B.P."/>
            <person name="de Bono B."/>
            <person name="Della Gatta G."/>
            <person name="di Bernardo D."/>
            <person name="Down T."/>
            <person name="Engstrom P."/>
            <person name="Fagiolini M."/>
            <person name="Faulkner G."/>
            <person name="Fletcher C.F."/>
            <person name="Fukushima T."/>
            <person name="Furuno M."/>
            <person name="Futaki S."/>
            <person name="Gariboldi M."/>
            <person name="Georgii-Hemming P."/>
            <person name="Gingeras T.R."/>
            <person name="Gojobori T."/>
            <person name="Green R.E."/>
            <person name="Gustincich S."/>
            <person name="Harbers M."/>
            <person name="Hayashi Y."/>
            <person name="Hensch T.K."/>
            <person name="Hirokawa N."/>
            <person name="Hill D."/>
            <person name="Huminiecki L."/>
            <person name="Iacono M."/>
            <person name="Ikeo K."/>
            <person name="Iwama A."/>
            <person name="Ishikawa T."/>
            <person name="Jakt M."/>
            <person name="Kanapin A."/>
            <person name="Katoh M."/>
            <person name="Kawasawa Y."/>
            <person name="Kelso J."/>
            <person name="Kitamura H."/>
            <person name="Kitano H."/>
            <person name="Kollias G."/>
            <person name="Krishnan S.P."/>
            <person name="Kruger A."/>
            <person name="Kummerfeld S.K."/>
            <person name="Kurochkin I.V."/>
            <person name="Lareau L.F."/>
            <person name="Lazarevic D."/>
            <person name="Lipovich L."/>
            <person name="Liu J."/>
            <person name="Liuni S."/>
            <person name="McWilliam S."/>
            <person name="Madan Babu M."/>
            <person name="Madera M."/>
            <person name="Marchionni L."/>
            <person name="Matsuda H."/>
            <person name="Matsuzawa S."/>
            <person name="Miki H."/>
            <person name="Mignone F."/>
            <person name="Miyake S."/>
            <person name="Morris K."/>
            <person name="Mottagui-Tabar S."/>
            <person name="Mulder N."/>
            <person name="Nakano N."/>
            <person name="Nakauchi H."/>
            <person name="Ng P."/>
            <person name="Nilsson R."/>
            <person name="Nishiguchi S."/>
            <person name="Nishikawa S."/>
            <person name="Nori F."/>
            <person name="Ohara O."/>
            <person name="Okazaki Y."/>
            <person name="Orlando V."/>
            <person name="Pang K.C."/>
            <person name="Pavan W.J."/>
            <person name="Pavesi G."/>
            <person name="Pesole G."/>
            <person name="Petrovsky N."/>
            <person name="Piazza S."/>
            <person name="Reed J."/>
            <person name="Reid J.F."/>
            <person name="Ring B.Z."/>
            <person name="Ringwald M."/>
            <person name="Rost B."/>
            <person name="Ruan Y."/>
            <person name="Salzberg S.L."/>
            <person name="Sandelin A."/>
            <person name="Schneider C."/>
            <person name="Schoenbach C."/>
            <person name="Sekiguchi K."/>
            <person name="Semple C.A."/>
            <person name="Seno S."/>
            <person name="Sessa L."/>
            <person name="Sheng Y."/>
            <person name="Shibata Y."/>
            <person name="Shimada H."/>
            <person name="Shimada K."/>
            <person name="Silva D."/>
            <person name="Sinclair B."/>
            <person name="Sperling S."/>
            <person name="Stupka E."/>
            <person name="Sugiura K."/>
            <person name="Sultana R."/>
            <person name="Takenaka Y."/>
            <person name="Taki K."/>
            <person name="Tammoja K."/>
            <person name="Tan S.L."/>
            <person name="Tang S."/>
            <person name="Taylor M.S."/>
            <person name="Tegner J."/>
            <person name="Teichmann S.A."/>
            <person name="Ueda H.R."/>
            <person name="van Nimwegen E."/>
            <person name="Verardo R."/>
            <person name="Wei C.L."/>
            <person name="Yagi K."/>
            <person name="Yamanishi H."/>
            <person name="Zabarovsky E."/>
            <person name="Zhu S."/>
            <person name="Zimmer A."/>
            <person name="Hide W."/>
            <person name="Bult C."/>
            <person name="Grimmond S.M."/>
            <person name="Teasdale R.D."/>
            <person name="Liu E.T."/>
            <person name="Brusic V."/>
            <person name="Quackenbush J."/>
            <person name="Wahlestedt C."/>
            <person name="Mattick J.S."/>
            <person name="Hume D.A."/>
            <person name="Kai C."/>
            <person name="Sasaki D."/>
            <person name="Tomaru Y."/>
            <person name="Fukuda S."/>
            <person name="Kanamori-Katayama M."/>
            <person name="Suzuki M."/>
            <person name="Aoki J."/>
            <person name="Arakawa T."/>
            <person name="Iida J."/>
            <person name="Imamura K."/>
            <person name="Itoh M."/>
            <person name="Kato T."/>
            <person name="Kawaji H."/>
            <person name="Kawagashira N."/>
            <person name="Kawashima T."/>
            <person name="Kojima M."/>
            <person name="Kondo S."/>
            <person name="Konno H."/>
            <person name="Nakano K."/>
            <person name="Ninomiya N."/>
            <person name="Nishio T."/>
            <person name="Okada M."/>
            <person name="Plessy C."/>
            <person name="Shibata K."/>
            <person name="Shiraki T."/>
            <person name="Suzuki S."/>
            <person name="Tagami M."/>
            <person name="Waki K."/>
            <person name="Watahiki A."/>
            <person name="Okamura-Oho Y."/>
            <person name="Suzuki H."/>
            <person name="Kawai J."/>
            <person name="Hayashizaki Y."/>
        </authorList>
    </citation>
    <scope>NUCLEOTIDE SEQUENCE [LARGE SCALE MRNA] (ISOFORMS 1; 2; 3 AND 4)</scope>
    <source>
        <strain>C57BL/6J</strain>
        <tissue>Brain cortex</tissue>
        <tissue>Colon</tissue>
        <tissue>Diencephalon</tissue>
        <tissue>Liver tumor</tissue>
        <tissue>Testis</tissue>
    </source>
</reference>
<reference key="3">
    <citation type="journal article" date="2004" name="Genome Res.">
        <title>The status, quality, and expansion of the NIH full-length cDNA project: the Mammalian Gene Collection (MGC).</title>
        <authorList>
            <consortium name="The MGC Project Team"/>
        </authorList>
    </citation>
    <scope>NUCLEOTIDE SEQUENCE [LARGE SCALE MRNA] (ISOFORM 1)</scope>
    <source>
        <tissue>Testis</tissue>
    </source>
</reference>
<reference key="4">
    <citation type="journal article" date="2002" name="Hum. Mol. Genet.">
        <title>Localization in the human retina of the X-linked retinitis pigmentosa protein RP2, its homologue cofactor C and the RP2 interacting protein Arl3.</title>
        <authorList>
            <person name="Grayson C."/>
            <person name="Bartolini F."/>
            <person name="Chapple J.P."/>
            <person name="Willison K.R."/>
            <person name="Bhamidipati A."/>
            <person name="Lewis S.A."/>
            <person name="Luthert P.J."/>
            <person name="Hardcastle A.J."/>
            <person name="Cowan N.J."/>
            <person name="Cheetham M.E."/>
        </authorList>
    </citation>
    <scope>TISSUE SPECIFICITY</scope>
</reference>
<reference key="5">
    <citation type="journal article" date="2010" name="Cell">
        <title>A tissue-specific atlas of mouse protein phosphorylation and expression.</title>
        <authorList>
            <person name="Huttlin E.L."/>
            <person name="Jedrychowski M.P."/>
            <person name="Elias J.E."/>
            <person name="Goswami T."/>
            <person name="Rad R."/>
            <person name="Beausoleil S.A."/>
            <person name="Villen J."/>
            <person name="Haas W."/>
            <person name="Sowa M.E."/>
            <person name="Gygi S.P."/>
        </authorList>
    </citation>
    <scope>IDENTIFICATION BY MASS SPECTROMETRY [LARGE SCALE ANALYSIS]</scope>
    <source>
        <tissue>Brain</tissue>
        <tissue>Pancreas</tissue>
        <tissue>Spleen</tissue>
    </source>
</reference>
<dbReference type="EMBL" id="AJ303371">
    <property type="protein sequence ID" value="CAC21499.1"/>
    <property type="molecule type" value="mRNA"/>
</dbReference>
<dbReference type="EMBL" id="AK033954">
    <property type="protein sequence ID" value="BAC28525.1"/>
    <property type="molecule type" value="mRNA"/>
</dbReference>
<dbReference type="EMBL" id="AK044002">
    <property type="protein sequence ID" value="BAC31734.1"/>
    <property type="molecule type" value="mRNA"/>
</dbReference>
<dbReference type="EMBL" id="AK050418">
    <property type="protein sequence ID" value="BAC34245.1"/>
    <property type="molecule type" value="mRNA"/>
</dbReference>
<dbReference type="EMBL" id="AK076907">
    <property type="protein sequence ID" value="BAC36524.1"/>
    <property type="molecule type" value="mRNA"/>
</dbReference>
<dbReference type="EMBL" id="AK132713">
    <property type="protein sequence ID" value="BAE21316.1"/>
    <property type="molecule type" value="mRNA"/>
</dbReference>
<dbReference type="EMBL" id="AK162309">
    <property type="protein sequence ID" value="BAE36846.1"/>
    <property type="molecule type" value="mRNA"/>
</dbReference>
<dbReference type="EMBL" id="BC049698">
    <property type="protein sequence ID" value="AAH49698.1"/>
    <property type="molecule type" value="mRNA"/>
</dbReference>
<dbReference type="CCDS" id="CCDS30041.1">
    <molecule id="Q9EPK2-1"/>
</dbReference>
<dbReference type="CCDS" id="CCDS72346.1">
    <molecule id="Q9EPK2-4"/>
</dbReference>
<dbReference type="RefSeq" id="NP_001277572.1">
    <molecule id="Q9EPK2-1"/>
    <property type="nucleotide sequence ID" value="NM_001290643.2"/>
</dbReference>
<dbReference type="RefSeq" id="NP_001277573.1">
    <molecule id="Q9EPK2-4"/>
    <property type="nucleotide sequence ID" value="NM_001290644.2"/>
</dbReference>
<dbReference type="RefSeq" id="NP_598430.1">
    <molecule id="Q9EPK2-1"/>
    <property type="nucleotide sequence ID" value="NM_133669.6"/>
</dbReference>
<dbReference type="RefSeq" id="XP_017173928.1">
    <molecule id="Q9EPK2-4"/>
    <property type="nucleotide sequence ID" value="XM_017318439.3"/>
</dbReference>
<dbReference type="SMR" id="Q9EPK2"/>
<dbReference type="BioGRID" id="202960">
    <property type="interactions" value="3"/>
</dbReference>
<dbReference type="FunCoup" id="Q9EPK2">
    <property type="interactions" value="2881"/>
</dbReference>
<dbReference type="IntAct" id="Q9EPK2">
    <property type="interactions" value="2"/>
</dbReference>
<dbReference type="MINT" id="Q9EPK2"/>
<dbReference type="STRING" id="10090.ENSMUSP00000033372"/>
<dbReference type="iPTMnet" id="Q9EPK2"/>
<dbReference type="PhosphoSitePlus" id="Q9EPK2"/>
<dbReference type="SwissPalm" id="Q9EPK2"/>
<dbReference type="jPOST" id="Q9EPK2"/>
<dbReference type="PaxDb" id="10090-ENSMUSP00000033372"/>
<dbReference type="PeptideAtlas" id="Q9EPK2"/>
<dbReference type="ProteomicsDB" id="300011">
    <molecule id="Q9EPK2-1"/>
</dbReference>
<dbReference type="ProteomicsDB" id="300012">
    <molecule id="Q9EPK2-2"/>
</dbReference>
<dbReference type="ProteomicsDB" id="300013">
    <molecule id="Q9EPK2-3"/>
</dbReference>
<dbReference type="ProteomicsDB" id="300014">
    <molecule id="Q9EPK2-4"/>
</dbReference>
<dbReference type="Pumba" id="Q9EPK2"/>
<dbReference type="Antibodypedia" id="373">
    <property type="antibodies" value="164 antibodies from 26 providers"/>
</dbReference>
<dbReference type="DNASU" id="19889"/>
<dbReference type="Ensembl" id="ENSMUST00000033372.13">
    <molecule id="Q9EPK2-1"/>
    <property type="protein sequence ID" value="ENSMUSP00000033372.7"/>
    <property type="gene ID" value="ENSMUSG00000060090.17"/>
</dbReference>
<dbReference type="Ensembl" id="ENSMUST00000115387.8">
    <molecule id="Q9EPK2-4"/>
    <property type="protein sequence ID" value="ENSMUSP00000111045.2"/>
    <property type="gene ID" value="ENSMUSG00000060090.17"/>
</dbReference>
<dbReference type="Ensembl" id="ENSMUST00000115391.8">
    <molecule id="Q9EPK2-1"/>
    <property type="protein sequence ID" value="ENSMUSP00000111049.2"/>
    <property type="gene ID" value="ENSMUSG00000060090.17"/>
</dbReference>
<dbReference type="Ensembl" id="ENSMUST00000133619.2">
    <molecule id="Q9EPK2-3"/>
    <property type="protein sequence ID" value="ENSMUSP00000138724.2"/>
    <property type="gene ID" value="ENSMUSG00000060090.17"/>
</dbReference>
<dbReference type="Ensembl" id="ENSMUST00000134349.8">
    <molecule id="Q9EPK2-2"/>
    <property type="protein sequence ID" value="ENSMUSP00000138352.2"/>
    <property type="gene ID" value="ENSMUSG00000060090.17"/>
</dbReference>
<dbReference type="GeneID" id="19889"/>
<dbReference type="KEGG" id="mmu:19889"/>
<dbReference type="UCSC" id="uc009ssv.2">
    <molecule id="Q9EPK2-1"/>
    <property type="organism name" value="mouse"/>
</dbReference>
<dbReference type="AGR" id="MGI:1277953"/>
<dbReference type="CTD" id="6102"/>
<dbReference type="MGI" id="MGI:1277953">
    <property type="gene designation" value="Rp2"/>
</dbReference>
<dbReference type="VEuPathDB" id="HostDB:ENSMUSG00000060090"/>
<dbReference type="eggNOG" id="KOG2512">
    <property type="taxonomic scope" value="Eukaryota"/>
</dbReference>
<dbReference type="GeneTree" id="ENSGT00940000158262"/>
<dbReference type="HOGENOM" id="CLU_056119_0_0_1"/>
<dbReference type="InParanoid" id="Q9EPK2"/>
<dbReference type="OMA" id="KDYMLTG"/>
<dbReference type="OrthoDB" id="31977at9989"/>
<dbReference type="PhylomeDB" id="Q9EPK2"/>
<dbReference type="TreeFam" id="TF105832"/>
<dbReference type="Reactome" id="R-MMU-5624138">
    <property type="pathway name" value="Trafficking of myristoylated proteins to the cilium"/>
</dbReference>
<dbReference type="BioGRID-ORCS" id="19889">
    <property type="hits" value="2 hits in 46 CRISPR screens"/>
</dbReference>
<dbReference type="CD-CODE" id="CE726F99">
    <property type="entry name" value="Postsynaptic density"/>
</dbReference>
<dbReference type="PRO" id="PR:Q9EPK2"/>
<dbReference type="Proteomes" id="UP000000589">
    <property type="component" value="Chromosome X"/>
</dbReference>
<dbReference type="RNAct" id="Q9EPK2">
    <property type="molecule type" value="protein"/>
</dbReference>
<dbReference type="Bgee" id="ENSMUSG00000060090">
    <property type="expression patterns" value="Expressed in olfactory epithelium and 230 other cell types or tissues"/>
</dbReference>
<dbReference type="GO" id="GO:0005814">
    <property type="term" value="C:centriole"/>
    <property type="evidence" value="ECO:0000314"/>
    <property type="project" value="MGI"/>
</dbReference>
<dbReference type="GO" id="GO:0036064">
    <property type="term" value="C:ciliary basal body"/>
    <property type="evidence" value="ECO:0000314"/>
    <property type="project" value="MGI"/>
</dbReference>
<dbReference type="GO" id="GO:0005737">
    <property type="term" value="C:cytoplasm"/>
    <property type="evidence" value="ECO:0000250"/>
    <property type="project" value="UniProtKB"/>
</dbReference>
<dbReference type="GO" id="GO:0031410">
    <property type="term" value="C:cytoplasmic vesicle"/>
    <property type="evidence" value="ECO:0000266"/>
    <property type="project" value="MGI"/>
</dbReference>
<dbReference type="GO" id="GO:0005829">
    <property type="term" value="C:cytosol"/>
    <property type="evidence" value="ECO:0007669"/>
    <property type="project" value="Ensembl"/>
</dbReference>
<dbReference type="GO" id="GO:0005794">
    <property type="term" value="C:Golgi apparatus"/>
    <property type="evidence" value="ECO:0000314"/>
    <property type="project" value="MGI"/>
</dbReference>
<dbReference type="GO" id="GO:0016604">
    <property type="term" value="C:nuclear body"/>
    <property type="evidence" value="ECO:0007669"/>
    <property type="project" value="Ensembl"/>
</dbReference>
<dbReference type="GO" id="GO:1990075">
    <property type="term" value="C:periciliary membrane compartment"/>
    <property type="evidence" value="ECO:0000314"/>
    <property type="project" value="MGI"/>
</dbReference>
<dbReference type="GO" id="GO:0005886">
    <property type="term" value="C:plasma membrane"/>
    <property type="evidence" value="ECO:0000314"/>
    <property type="project" value="MGI"/>
</dbReference>
<dbReference type="GO" id="GO:0005525">
    <property type="term" value="F:GTP binding"/>
    <property type="evidence" value="ECO:0007669"/>
    <property type="project" value="UniProtKB-KW"/>
</dbReference>
<dbReference type="GO" id="GO:0005096">
    <property type="term" value="F:GTPase activator activity"/>
    <property type="evidence" value="ECO:0000250"/>
    <property type="project" value="UniProtKB"/>
</dbReference>
<dbReference type="GO" id="GO:0000287">
    <property type="term" value="F:magnesium ion binding"/>
    <property type="evidence" value="ECO:0007669"/>
    <property type="project" value="Ensembl"/>
</dbReference>
<dbReference type="GO" id="GO:0006892">
    <property type="term" value="P:post-Golgi vesicle-mediated transport"/>
    <property type="evidence" value="ECO:0000266"/>
    <property type="project" value="MGI"/>
</dbReference>
<dbReference type="GO" id="GO:0015031">
    <property type="term" value="P:protein transport"/>
    <property type="evidence" value="ECO:0007669"/>
    <property type="project" value="UniProtKB-KW"/>
</dbReference>
<dbReference type="FunFam" id="2.160.20.70:FF:000004">
    <property type="entry name" value="Protein XRP2"/>
    <property type="match status" value="1"/>
</dbReference>
<dbReference type="FunFam" id="3.30.70.141:FF:000007">
    <property type="entry name" value="Protein XRP2"/>
    <property type="match status" value="1"/>
</dbReference>
<dbReference type="Gene3D" id="2.160.20.70">
    <property type="match status" value="1"/>
</dbReference>
<dbReference type="Gene3D" id="3.30.70.141">
    <property type="entry name" value="Nucleoside diphosphate kinase-like domain"/>
    <property type="match status" value="1"/>
</dbReference>
<dbReference type="InterPro" id="IPR017901">
    <property type="entry name" value="C-CAP_CF_C-like"/>
</dbReference>
<dbReference type="InterPro" id="IPR016098">
    <property type="entry name" value="CAP/MinC_C"/>
</dbReference>
<dbReference type="InterPro" id="IPR036223">
    <property type="entry name" value="CAP_C_sf"/>
</dbReference>
<dbReference type="InterPro" id="IPR006599">
    <property type="entry name" value="CARP_motif"/>
</dbReference>
<dbReference type="InterPro" id="IPR036850">
    <property type="entry name" value="NDK-like_dom_sf"/>
</dbReference>
<dbReference type="InterPro" id="IPR012945">
    <property type="entry name" value="Tubulin-bd_cofactor_C_dom"/>
</dbReference>
<dbReference type="InterPro" id="IPR039093">
    <property type="entry name" value="XRP2"/>
</dbReference>
<dbReference type="PANTHER" id="PTHR15440:SF0">
    <property type="entry name" value="PROTEIN XRP2"/>
    <property type="match status" value="1"/>
</dbReference>
<dbReference type="PANTHER" id="PTHR15440">
    <property type="entry name" value="XRP2 PROTEIN"/>
    <property type="match status" value="1"/>
</dbReference>
<dbReference type="Pfam" id="PF07986">
    <property type="entry name" value="TBCC"/>
    <property type="match status" value="1"/>
</dbReference>
<dbReference type="PIRSF" id="PIRSF037947">
    <property type="entry name" value="Protein_XRP2"/>
    <property type="match status" value="1"/>
</dbReference>
<dbReference type="SMART" id="SM00673">
    <property type="entry name" value="CARP"/>
    <property type="match status" value="2"/>
</dbReference>
<dbReference type="SUPFAM" id="SSF69340">
    <property type="entry name" value="C-terminal domain of adenylylcyclase associated protein"/>
    <property type="match status" value="1"/>
</dbReference>
<dbReference type="SUPFAM" id="SSF54919">
    <property type="entry name" value="Nucleoside diphosphate kinase, NDK"/>
    <property type="match status" value="1"/>
</dbReference>
<dbReference type="PROSITE" id="PS51329">
    <property type="entry name" value="C_CAP_COFACTOR_C"/>
    <property type="match status" value="1"/>
</dbReference>
<dbReference type="PROSITE" id="PS51374">
    <property type="entry name" value="NDPK_LIKE"/>
    <property type="match status" value="1"/>
</dbReference>
<comment type="function">
    <text>Acts as a GTPase-activating protein (GAP) involved in trafficking between the Golgi and the ciliary membrane. Involved in localization of proteins, such as NPHP3, to the cilium membrane by inducing hydrolysis of GTP ARL3, leading to the release of UNC119 (or UNC119B). Acts as a GTPase-activating protein (GAP) for tubulin in concert with tubulin-specific chaperone C, but does not enhance tubulin heterodimerization. Acts as a guanine nucleotide dissociation inhibitor towards ADP-ribosylation factor-like proteins.</text>
</comment>
<comment type="subunit">
    <text evidence="1">Found in a complex with ARL3, RP2 and UNC119 (or UNC119B); RP2 induces hydrolysis of GTP ARL3 in the complex, leading to the release of UNC119 (or UNC119B). Interacts with ARL3; interaction is direct and stimulated with the activated GTP-bound form of ARL3 (By similarity).</text>
</comment>
<comment type="subcellular location">
    <subcellularLocation>
        <location evidence="2">Cell membrane</location>
        <topology evidence="2">Lipid-anchor</topology>
        <orientation evidence="2">Cytoplasmic side</orientation>
    </subcellularLocation>
    <subcellularLocation>
        <location evidence="2">Cell projection</location>
        <location evidence="2">Cilium</location>
    </subcellularLocation>
    <text evidence="2">Detected predominantly at the plasma membrane of rod and cone photoreceptors. Not detected in the nucleus.</text>
</comment>
<comment type="alternative products">
    <event type="alternative splicing"/>
    <isoform>
        <id>Q9EPK2-1</id>
        <name>1</name>
        <sequence type="displayed"/>
    </isoform>
    <isoform>
        <id>Q9EPK2-2</id>
        <name>2</name>
        <sequence type="described" ref="VSP_018482"/>
    </isoform>
    <isoform>
        <id>Q9EPK2-3</id>
        <name>3</name>
        <sequence type="described" ref="VSP_018483 VSP_018484"/>
    </isoform>
    <isoform>
        <id>Q9EPK2-4</id>
        <name>4</name>
        <sequence type="described" ref="VSP_018481"/>
    </isoform>
</comment>
<comment type="tissue specificity">
    <text evidence="5">Retina (at protein level).</text>
</comment>
<comment type="PTM">
    <text evidence="7">Myristoylated on Gly-2; which may be required for membrane targeting.</text>
</comment>
<comment type="PTM">
    <text evidence="7">Palmitoylated on Cys-3; which may be required for plasma membrane targeting.</text>
</comment>
<comment type="similarity">
    <text evidence="7">Belongs to the TBCC family.</text>
</comment>
<proteinExistence type="evidence at protein level"/>
<sequence>MGCCFTKRRKSEKAEGEEEQPKLYSWDQREKVDPKDYMFSGLKDETVGRLPGKVAGQQFVIQDCENCNIYIFDHSATITIDDCTNCVIFLGPVKGSVFFRNCRDCKCTLACQQFRVRDCRKLEVFLCCATQPIIESSTNIKFGCFQWYYPELAAQFKDAGLSIFNNIWSHVHDFTPVSGELNWSLLPENAVVQDYVPIPMTEEFKAVRISTEANRSIVPVSRGQRQKYSDESCLVVLFADDYTTANARKLIDEMVGKGFSLVQTKEMSMKTEDAQRVFQEKASDFLLLLNKGPVIALEFNGDDAVQECHLIVNGMFNGTKMFVSEKKETASGDVDSFYNFAEIQMGI</sequence>
<evidence type="ECO:0000250" key="1"/>
<evidence type="ECO:0000250" key="2">
    <source>
        <dbReference type="UniProtKB" id="O75695"/>
    </source>
</evidence>
<evidence type="ECO:0000255" key="3">
    <source>
        <dbReference type="PROSITE-ProRule" id="PRU00659"/>
    </source>
</evidence>
<evidence type="ECO:0000256" key="4">
    <source>
        <dbReference type="SAM" id="MobiDB-lite"/>
    </source>
</evidence>
<evidence type="ECO:0000269" key="5">
    <source>
    </source>
</evidence>
<evidence type="ECO:0000303" key="6">
    <source>
    </source>
</evidence>
<evidence type="ECO:0000305" key="7"/>
<accession>Q9EPK2</accession>
<accession>Q8BLN8</accession>
<accession>Q8BVQ8</accession>
<accession>Q8BZP9</accession>
<keyword id="KW-0025">Alternative splicing</keyword>
<keyword id="KW-1003">Cell membrane</keyword>
<keyword id="KW-0966">Cell projection</keyword>
<keyword id="KW-0969">Cilium</keyword>
<keyword id="KW-0342">GTP-binding</keyword>
<keyword id="KW-0343">GTPase activation</keyword>
<keyword id="KW-0449">Lipoprotein</keyword>
<keyword id="KW-0472">Membrane</keyword>
<keyword id="KW-0519">Myristate</keyword>
<keyword id="KW-0547">Nucleotide-binding</keyword>
<keyword id="KW-0564">Palmitate</keyword>
<keyword id="KW-0653">Protein transport</keyword>
<keyword id="KW-1185">Reference proteome</keyword>
<keyword id="KW-0813">Transport</keyword>